<evidence type="ECO:0000255" key="1">
    <source>
        <dbReference type="PROSITE-ProRule" id="PRU00532"/>
    </source>
</evidence>
<evidence type="ECO:0000269" key="2">
    <source>
    </source>
</evidence>
<evidence type="ECO:0000269" key="3">
    <source>
    </source>
</evidence>
<evidence type="ECO:0000303" key="4">
    <source>
    </source>
</evidence>
<evidence type="ECO:0000303" key="5">
    <source>
    </source>
</evidence>
<evidence type="ECO:0000305" key="6"/>
<evidence type="ECO:0000312" key="7">
    <source>
        <dbReference type="EMBL" id="AAK42924.1"/>
    </source>
</evidence>
<evidence type="ECO:0000312" key="8">
    <source>
        <dbReference type="Proteomes" id="UP000001974"/>
    </source>
</evidence>
<evidence type="ECO:0007744" key="9">
    <source>
        <dbReference type="PDB" id="3F8K"/>
    </source>
</evidence>
<evidence type="ECO:0007829" key="10">
    <source>
        <dbReference type="PDB" id="3F8K"/>
    </source>
</evidence>
<proteinExistence type="evidence at protein level"/>
<reference evidence="8" key="1">
    <citation type="journal article" date="2001" name="Proc. Natl. Acad. Sci. U.S.A.">
        <title>The complete genome of the crenarchaeon Sulfolobus solfataricus P2.</title>
        <authorList>
            <person name="She Q."/>
            <person name="Singh R.K."/>
            <person name="Confalonieri F."/>
            <person name="Zivanovic Y."/>
            <person name="Allard G."/>
            <person name="Awayez M.J."/>
            <person name="Chan-Weiher C.C.-Y."/>
            <person name="Clausen I.G."/>
            <person name="Curtis B.A."/>
            <person name="De Moors A."/>
            <person name="Erauso G."/>
            <person name="Fletcher C."/>
            <person name="Gordon P.M.K."/>
            <person name="Heikamp-de Jong I."/>
            <person name="Jeffries A.C."/>
            <person name="Kozera C.J."/>
            <person name="Medina N."/>
            <person name="Peng X."/>
            <person name="Thi-Ngoc H.P."/>
            <person name="Redder P."/>
            <person name="Schenk M.E."/>
            <person name="Theriault C."/>
            <person name="Tolstrup N."/>
            <person name="Charlebois R.L."/>
            <person name="Doolittle W.F."/>
            <person name="Duguet M."/>
            <person name="Gaasterland T."/>
            <person name="Garrett R.A."/>
            <person name="Ragan M.A."/>
            <person name="Sensen C.W."/>
            <person name="Van der Oost J."/>
        </authorList>
    </citation>
    <scope>NUCLEOTIDE SEQUENCE [LARGE SCALE GENOMIC DNA]</scope>
    <source>
        <strain evidence="8">ATCC 35092 / DSM 1617 / JCM 11322 / P2</strain>
    </source>
</reference>
<reference evidence="6" key="2">
    <citation type="journal article" date="2005" name="J. Biol. Chem.">
        <title>Sir2 and the acetyltransferase, Pat, regulate the archaeal chromatin protein, Alba.</title>
        <authorList>
            <person name="Marsh V.L."/>
            <person name="Peak-Chew S.Y."/>
            <person name="Bell S.D."/>
        </authorList>
    </citation>
    <scope>FUNCTION</scope>
    <scope>CATALYTIC ACTIVITY</scope>
    <scope>BIOPHYSICOCHEMICAL PROPERTIES</scope>
    <scope>MUTAGENESIS OF 89-GLY--GLY-91</scope>
</reference>
<reference evidence="9" key="3">
    <citation type="journal article" date="2009" name="J. Biol. Chem.">
        <title>Structure and biochemical characterization of protein acetyltransferase from Sulfolobus solfataricus.</title>
        <authorList>
            <person name="Brent M.M."/>
            <person name="Iwata A."/>
            <person name="Carten J."/>
            <person name="Zhao K."/>
            <person name="Marmorstein R."/>
        </authorList>
    </citation>
    <scope>X-RAY CRYSTALLOGRAPHY (1.84 ANGSTROMS) IN COMPLEX WITH COENZYME A</scope>
    <scope>FUNCTION</scope>
    <scope>CATALYTIC ACTIVITY</scope>
    <scope>BIOPHYSICOCHEMICAL PROPERTIES</scope>
    <scope>MUTAGENESIS OF ASP-29; TYR-31; ARG-33; HIS-36; TYR-38; GLU-42; GLU-43; ASP-53; GLU-68; HIS-72; GLU-76; SER-78; TYR-113 AND MET-121</scope>
</reference>
<keyword id="KW-0002">3D-structure</keyword>
<keyword id="KW-0012">Acyltransferase</keyword>
<keyword id="KW-1185">Reference proteome</keyword>
<keyword id="KW-0808">Transferase</keyword>
<comment type="function">
    <text evidence="2 3">Modulates activity of albA1, the major archaeal DNA compaction protein, by decreasing albA1's nucleic acid binding affinity through acetylation of 'Lys-16'.</text>
</comment>
<comment type="catalytic activity">
    <reaction evidence="2 3">
        <text>L-lysyl-[protein] + acetyl-CoA = N(6)-acetyl-L-lysyl-[protein] + CoA + H(+)</text>
        <dbReference type="Rhea" id="RHEA:45948"/>
        <dbReference type="Rhea" id="RHEA-COMP:9752"/>
        <dbReference type="Rhea" id="RHEA-COMP:10731"/>
        <dbReference type="ChEBI" id="CHEBI:15378"/>
        <dbReference type="ChEBI" id="CHEBI:29969"/>
        <dbReference type="ChEBI" id="CHEBI:57287"/>
        <dbReference type="ChEBI" id="CHEBI:57288"/>
        <dbReference type="ChEBI" id="CHEBI:61930"/>
    </reaction>
</comment>
<comment type="biophysicochemical properties">
    <kinetics>
        <KM evidence="3">580 uM for albA1 11-mer peptide VLIGKKPVMNY</KM>
        <KM evidence="3">48 uM for acetyl-CoA</KM>
        <text evidence="3">kcat is 2.31 min(-1).</text>
    </kinetics>
    <phDependence>
        <text evidence="3">Optimum pH is 7.0-9.0 at 75.0 degrees Celsius.</text>
    </phDependence>
    <temperatureDependence>
        <text evidence="2">Optimal temperatures between 70 and 90 degrees Celsius.</text>
    </temperatureDependence>
</comment>
<comment type="similarity">
    <text evidence="6">Belongs to the acetyltransferase family. GNAT subfamily.</text>
</comment>
<gene>
    <name evidence="6" type="primary">pat</name>
    <name evidence="7" type="ordered locus">SSO2813</name>
</gene>
<organism evidence="8">
    <name type="scientific">Saccharolobus solfataricus (strain ATCC 35092 / DSM 1617 / JCM 11322 / P2)</name>
    <name type="common">Sulfolobus solfataricus</name>
    <dbReference type="NCBI Taxonomy" id="273057"/>
    <lineage>
        <taxon>Archaea</taxon>
        <taxon>Thermoproteota</taxon>
        <taxon>Thermoprotei</taxon>
        <taxon>Sulfolobales</taxon>
        <taxon>Sulfolobaceae</taxon>
        <taxon>Saccharolobus</taxon>
    </lineage>
</organism>
<feature type="chain" id="PRO_0000459687" description="N-acetyltransferase Pat">
    <location>
        <begin position="1"/>
        <end position="160"/>
    </location>
</feature>
<feature type="domain" description="N-acetyltransferase" evidence="1">
    <location>
        <begin position="5"/>
        <end position="148"/>
    </location>
</feature>
<feature type="binding site" evidence="3 9">
    <location>
        <position position="79"/>
    </location>
    <ligand>
        <name>CoA</name>
        <dbReference type="ChEBI" id="CHEBI:57287"/>
    </ligand>
</feature>
<feature type="binding site" evidence="3 9">
    <location>
        <position position="81"/>
    </location>
    <ligand>
        <name>CoA</name>
        <dbReference type="ChEBI" id="CHEBI:57287"/>
    </ligand>
</feature>
<feature type="binding site" evidence="3 9">
    <location>
        <position position="87"/>
    </location>
    <ligand>
        <name>CoA</name>
        <dbReference type="ChEBI" id="CHEBI:57287"/>
    </ligand>
</feature>
<feature type="binding site" evidence="3 9">
    <location>
        <position position="89"/>
    </location>
    <ligand>
        <name>CoA</name>
        <dbReference type="ChEBI" id="CHEBI:57287"/>
    </ligand>
</feature>
<feature type="binding site" evidence="3 9">
    <location>
        <position position="91"/>
    </location>
    <ligand>
        <name>CoA</name>
        <dbReference type="ChEBI" id="CHEBI:57287"/>
    </ligand>
</feature>
<feature type="binding site" evidence="3 9">
    <location>
        <position position="92"/>
    </location>
    <ligand>
        <name>CoA</name>
        <dbReference type="ChEBI" id="CHEBI:57287"/>
    </ligand>
</feature>
<feature type="binding site" evidence="3 9">
    <location>
        <position position="118"/>
    </location>
    <ligand>
        <name>CoA</name>
        <dbReference type="ChEBI" id="CHEBI:57287"/>
    </ligand>
</feature>
<feature type="binding site" evidence="3 9">
    <location>
        <position position="123"/>
    </location>
    <ligand>
        <name>CoA</name>
        <dbReference type="ChEBI" id="CHEBI:57287"/>
    </ligand>
</feature>
<feature type="binding site" evidence="3 9">
    <location>
        <position position="127"/>
    </location>
    <ligand>
        <name>CoA</name>
        <dbReference type="ChEBI" id="CHEBI:57287"/>
    </ligand>
</feature>
<feature type="mutagenesis site" description="Modestly reduces acetylation activity." evidence="3">
    <original>D</original>
    <variation>A</variation>
    <location>
        <position position="29"/>
    </location>
</feature>
<feature type="mutagenesis site" description="No effect on acetylation activity." evidence="3">
    <original>Y</original>
    <variation>S</variation>
    <location>
        <position position="31"/>
    </location>
</feature>
<feature type="mutagenesis site" description="Reduces acetylation activity, affinity to albA1 11-mer peptide and has no effect on acetyl-CoA affinity." evidence="3">
    <original>R</original>
    <variation>A</variation>
    <location>
        <position position="33"/>
    </location>
</feature>
<feature type="mutagenesis site" description="No effect on acetylation activity." evidence="3">
    <original>H</original>
    <variation>A</variation>
    <location>
        <position position="36"/>
    </location>
</feature>
<feature type="mutagenesis site" description="Reduces acetylation activity." evidence="3">
    <original>Y</original>
    <variation>S</variation>
    <location>
        <position position="38"/>
    </location>
</feature>
<feature type="mutagenesis site" description="Modestly reduces acetylation activity." evidence="3">
    <original>E</original>
    <variation>Q</variation>
    <location>
        <position position="42"/>
    </location>
</feature>
<feature type="mutagenesis site" description="Modestly reduces acetylation activity." evidence="3">
    <original>E</original>
    <variation>Q</variation>
    <location>
        <position position="43"/>
    </location>
</feature>
<feature type="mutagenesis site" description="Reduces acetylation activity." evidence="3">
    <original>D</original>
    <variation>N</variation>
    <location>
        <position position="53"/>
    </location>
</feature>
<feature type="mutagenesis site" description="No effect on acetylation activity." evidence="3">
    <original>E</original>
    <variation>Q</variation>
    <location>
        <position position="68"/>
    </location>
</feature>
<feature type="mutagenesis site" description="Modestly reduces acetylation activity. Modestly reduces acetylation activity, reduces affinity to albA1 11-mer peptide and has no effect on acetyl-CoA affinity; when associated with Q-76. Reduces acetylation activity; when associated with A-76." evidence="3">
    <original>H</original>
    <variation>A</variation>
    <location>
        <position position="72"/>
    </location>
</feature>
<feature type="mutagenesis site" description="Reduces acetylation activity, affinity to albA1 11-mer peptide and has no effect on acetyl-CoA affinity. Reduces acetylation activity; when associated with A-72." evidence="3">
    <original>E</original>
    <variation>A</variation>
    <location>
        <position position="76"/>
    </location>
</feature>
<feature type="mutagenesis site" description="No effect on acetylation activity. Modestly reduces acetylation activity, reduces affinity to albA1 11-mer peptide and has no effect on acetyl-CoA affinity; when associated with A-72." evidence="3">
    <original>E</original>
    <variation>Q</variation>
    <location>
        <position position="76"/>
    </location>
</feature>
<feature type="mutagenesis site" description="No effect on acetylation activity." evidence="3">
    <original>S</original>
    <variation>A</variation>
    <location>
        <position position="78"/>
    </location>
</feature>
<feature type="mutagenesis site" description="Modestly reduces acetylation activity." evidence="3">
    <original>S</original>
    <variation>C</variation>
    <location>
        <position position="78"/>
    </location>
</feature>
<feature type="mutagenesis site" description="Reduces acetylation activity." evidence="2">
    <original>GIG</original>
    <variation>AAA</variation>
    <location>
        <begin position="89"/>
        <end position="91"/>
    </location>
</feature>
<feature type="mutagenesis site" description="No effect on acetylation activity." evidence="3">
    <original>Y</original>
    <variation>F</variation>
    <location>
        <position position="113"/>
    </location>
</feature>
<feature type="mutagenesis site" description="Reduces acetylation activity, affinity to albA1 11-mer peptide and has no effect on acetyl-CoA affinity." evidence="3">
    <original>M</original>
    <variation>H</variation>
    <variation>Y</variation>
    <location>
        <position position="121"/>
    </location>
</feature>
<feature type="strand" evidence="10">
    <location>
        <begin position="6"/>
        <end position="9"/>
    </location>
</feature>
<feature type="helix" evidence="10">
    <location>
        <begin position="12"/>
        <end position="14"/>
    </location>
</feature>
<feature type="helix" evidence="10">
    <location>
        <begin position="15"/>
        <end position="24"/>
    </location>
</feature>
<feature type="helix" evidence="10">
    <location>
        <begin position="27"/>
        <end position="33"/>
    </location>
</feature>
<feature type="helix" evidence="10">
    <location>
        <begin position="35"/>
        <end position="39"/>
    </location>
</feature>
<feature type="strand" evidence="10">
    <location>
        <begin position="54"/>
        <end position="61"/>
    </location>
</feature>
<feature type="strand" evidence="10">
    <location>
        <begin position="64"/>
        <end position="72"/>
    </location>
</feature>
<feature type="strand" evidence="10">
    <location>
        <begin position="75"/>
        <end position="81"/>
    </location>
</feature>
<feature type="helix" evidence="10">
    <location>
        <begin position="83"/>
        <end position="85"/>
    </location>
</feature>
<feature type="helix" evidence="10">
    <location>
        <begin position="90"/>
        <end position="104"/>
    </location>
</feature>
<feature type="strand" evidence="10">
    <location>
        <begin position="108"/>
        <end position="114"/>
    </location>
</feature>
<feature type="helix" evidence="10">
    <location>
        <begin position="119"/>
        <end position="128"/>
    </location>
</feature>
<feature type="strand" evidence="10">
    <location>
        <begin position="131"/>
        <end position="134"/>
    </location>
</feature>
<feature type="strand" evidence="10">
    <location>
        <begin position="139"/>
        <end position="144"/>
    </location>
</feature>
<dbReference type="EC" id="2.3.1.-" evidence="2 3"/>
<dbReference type="EMBL" id="AE006641">
    <property type="protein sequence ID" value="AAK42924.1"/>
    <property type="molecule type" value="Genomic_DNA"/>
</dbReference>
<dbReference type="PIR" id="E90458">
    <property type="entry name" value="E90458"/>
</dbReference>
<dbReference type="RefSeq" id="WP_009989035.1">
    <property type="nucleotide sequence ID" value="NC_002754.1"/>
</dbReference>
<dbReference type="PDB" id="3F8K">
    <property type="method" value="X-ray"/>
    <property type="resolution" value="1.84 A"/>
    <property type="chains" value="A=1-160"/>
</dbReference>
<dbReference type="PDBsum" id="3F8K"/>
<dbReference type="SMR" id="Q97V23"/>
<dbReference type="STRING" id="273057.SSO2813"/>
<dbReference type="PaxDb" id="273057-SSO2813"/>
<dbReference type="EnsemblBacteria" id="AAK42924">
    <property type="protein sequence ID" value="AAK42924"/>
    <property type="gene ID" value="SSO2813"/>
</dbReference>
<dbReference type="KEGG" id="sso:SSO2813"/>
<dbReference type="PATRIC" id="fig|273057.12.peg.2900"/>
<dbReference type="eggNOG" id="arCOG00826">
    <property type="taxonomic scope" value="Archaea"/>
</dbReference>
<dbReference type="HOGENOM" id="CLU_1691612_0_0_2"/>
<dbReference type="InParanoid" id="Q97V23"/>
<dbReference type="PhylomeDB" id="Q97V23"/>
<dbReference type="BRENDA" id="2.3.1.B27">
    <property type="organism ID" value="6163"/>
</dbReference>
<dbReference type="EvolutionaryTrace" id="Q97V23"/>
<dbReference type="Proteomes" id="UP000001974">
    <property type="component" value="Chromosome"/>
</dbReference>
<dbReference type="GO" id="GO:0016747">
    <property type="term" value="F:acyltransferase activity, transferring groups other than amino-acyl groups"/>
    <property type="evidence" value="ECO:0007669"/>
    <property type="project" value="InterPro"/>
</dbReference>
<dbReference type="CDD" id="cd04301">
    <property type="entry name" value="NAT_SF"/>
    <property type="match status" value="1"/>
</dbReference>
<dbReference type="Gene3D" id="3.40.630.30">
    <property type="match status" value="1"/>
</dbReference>
<dbReference type="InterPro" id="IPR016181">
    <property type="entry name" value="Acyl_CoA_acyltransferase"/>
</dbReference>
<dbReference type="InterPro" id="IPR000182">
    <property type="entry name" value="GNAT_dom"/>
</dbReference>
<dbReference type="InterPro" id="IPR050276">
    <property type="entry name" value="MshD_Acetyltransferase"/>
</dbReference>
<dbReference type="PANTHER" id="PTHR43617">
    <property type="entry name" value="L-AMINO ACID N-ACETYLTRANSFERASE"/>
    <property type="match status" value="1"/>
</dbReference>
<dbReference type="PANTHER" id="PTHR43617:SF34">
    <property type="entry name" value="PUTATIVE-RELATED"/>
    <property type="match status" value="1"/>
</dbReference>
<dbReference type="Pfam" id="PF00583">
    <property type="entry name" value="Acetyltransf_1"/>
    <property type="match status" value="1"/>
</dbReference>
<dbReference type="SUPFAM" id="SSF55729">
    <property type="entry name" value="Acyl-CoA N-acyltransferases (Nat)"/>
    <property type="match status" value="1"/>
</dbReference>
<dbReference type="PROSITE" id="PS51186">
    <property type="entry name" value="GNAT"/>
    <property type="match status" value="1"/>
</dbReference>
<protein>
    <recommendedName>
        <fullName evidence="6">N-acetyltransferase Pat</fullName>
        <shortName evidence="4 5">ssPat</shortName>
        <ecNumber evidence="2 3">2.3.1.-</ecNumber>
    </recommendedName>
</protein>
<name>PAT_SACS2</name>
<accession>Q97V23</accession>
<sequence>MNDQIKIRKATKEDWEKIYQLYNSLSDEDLYLRFFHLYRITEEDAKKIASNEDHVTFLAEVDGKVVGEASLHKDGEFSLVVHRNYRTLGIGTLLVKTLIEEAKKSGLSTVKFYTLPENTPMIKIGRKLGFKMRFYEDEVYGEMRLTERELNVNLATFSAP</sequence>